<accession>B0VNZ7</accession>
<sequence>MSNATKFGKVAVLLGGKSAERAVSLDSGQAVLDALLRSGVQAEAFDPQDRSVTELVNYDRAFIVLHGRGGEDGQIQGVLEWLNIPYTGTGVQGSAIGMDKVKTKQIWQGSDLPTAPYRIITKETDLDSVIAELGLPVIIKPVHEGSSVGMSKVEKAEDFAAAIEKATQHDAVVMAEKWITGREFTISFLNGQPLPVIRLQPPADVAFYDYEAKYQRNDVEYGIPCGLSETEEKKLQALCLRAFQAVGAEGWGRIDAMQDEQGNFWLLEVNTVPGMTSHSLVPKATKAVGYSFDELCVAILEQTLEGTA</sequence>
<gene>
    <name evidence="2" type="primary">ddl</name>
    <name type="ordered locus">ABSDF3470</name>
</gene>
<feature type="chain" id="PRO_1000091155" description="D-alanine--D-alanine ligase">
    <location>
        <begin position="1"/>
        <end position="308"/>
    </location>
</feature>
<feature type="domain" description="ATP-grasp" evidence="2">
    <location>
        <begin position="104"/>
        <end position="301"/>
    </location>
</feature>
<feature type="binding site" evidence="2">
    <location>
        <begin position="130"/>
        <end position="185"/>
    </location>
    <ligand>
        <name>ATP</name>
        <dbReference type="ChEBI" id="CHEBI:30616"/>
    </ligand>
</feature>
<feature type="binding site" evidence="2">
    <location>
        <position position="255"/>
    </location>
    <ligand>
        <name>Mg(2+)</name>
        <dbReference type="ChEBI" id="CHEBI:18420"/>
        <label>1</label>
    </ligand>
</feature>
<feature type="binding site" evidence="2">
    <location>
        <position position="268"/>
    </location>
    <ligand>
        <name>Mg(2+)</name>
        <dbReference type="ChEBI" id="CHEBI:18420"/>
        <label>1</label>
    </ligand>
</feature>
<feature type="binding site" evidence="2">
    <location>
        <position position="268"/>
    </location>
    <ligand>
        <name>Mg(2+)</name>
        <dbReference type="ChEBI" id="CHEBI:18420"/>
        <label>2</label>
    </ligand>
</feature>
<feature type="binding site" evidence="2">
    <location>
        <position position="270"/>
    </location>
    <ligand>
        <name>Mg(2+)</name>
        <dbReference type="ChEBI" id="CHEBI:18420"/>
        <label>2</label>
    </ligand>
</feature>
<evidence type="ECO:0000250" key="1"/>
<evidence type="ECO:0000255" key="2">
    <source>
        <dbReference type="HAMAP-Rule" id="MF_00047"/>
    </source>
</evidence>
<comment type="function">
    <text evidence="2">Cell wall formation.</text>
</comment>
<comment type="catalytic activity">
    <reaction evidence="2">
        <text>2 D-alanine + ATP = D-alanyl-D-alanine + ADP + phosphate + H(+)</text>
        <dbReference type="Rhea" id="RHEA:11224"/>
        <dbReference type="ChEBI" id="CHEBI:15378"/>
        <dbReference type="ChEBI" id="CHEBI:30616"/>
        <dbReference type="ChEBI" id="CHEBI:43474"/>
        <dbReference type="ChEBI" id="CHEBI:57416"/>
        <dbReference type="ChEBI" id="CHEBI:57822"/>
        <dbReference type="ChEBI" id="CHEBI:456216"/>
        <dbReference type="EC" id="6.3.2.4"/>
    </reaction>
</comment>
<comment type="cofactor">
    <cofactor evidence="1">
        <name>Mg(2+)</name>
        <dbReference type="ChEBI" id="CHEBI:18420"/>
    </cofactor>
    <cofactor evidence="1">
        <name>Mn(2+)</name>
        <dbReference type="ChEBI" id="CHEBI:29035"/>
    </cofactor>
    <text evidence="1">Binds 2 magnesium or manganese ions per subunit.</text>
</comment>
<comment type="pathway">
    <text evidence="2">Cell wall biogenesis; peptidoglycan biosynthesis.</text>
</comment>
<comment type="subcellular location">
    <subcellularLocation>
        <location evidence="2">Cytoplasm</location>
    </subcellularLocation>
</comment>
<comment type="similarity">
    <text evidence="2">Belongs to the D-alanine--D-alanine ligase family.</text>
</comment>
<proteinExistence type="inferred from homology"/>
<organism>
    <name type="scientific">Acinetobacter baumannii (strain SDF)</name>
    <dbReference type="NCBI Taxonomy" id="509170"/>
    <lineage>
        <taxon>Bacteria</taxon>
        <taxon>Pseudomonadati</taxon>
        <taxon>Pseudomonadota</taxon>
        <taxon>Gammaproteobacteria</taxon>
        <taxon>Moraxellales</taxon>
        <taxon>Moraxellaceae</taxon>
        <taxon>Acinetobacter</taxon>
        <taxon>Acinetobacter calcoaceticus/baumannii complex</taxon>
    </lineage>
</organism>
<protein>
    <recommendedName>
        <fullName evidence="2">D-alanine--D-alanine ligase</fullName>
        <ecNumber evidence="2">6.3.2.4</ecNumber>
    </recommendedName>
    <alternativeName>
        <fullName evidence="2">D-Ala-D-Ala ligase</fullName>
    </alternativeName>
    <alternativeName>
        <fullName evidence="2">D-alanylalanine synthetase</fullName>
    </alternativeName>
</protein>
<keyword id="KW-0067">ATP-binding</keyword>
<keyword id="KW-0133">Cell shape</keyword>
<keyword id="KW-0961">Cell wall biogenesis/degradation</keyword>
<keyword id="KW-0963">Cytoplasm</keyword>
<keyword id="KW-0436">Ligase</keyword>
<keyword id="KW-0460">Magnesium</keyword>
<keyword id="KW-0464">Manganese</keyword>
<keyword id="KW-0479">Metal-binding</keyword>
<keyword id="KW-0547">Nucleotide-binding</keyword>
<keyword id="KW-0573">Peptidoglycan synthesis</keyword>
<dbReference type="EC" id="6.3.2.4" evidence="2"/>
<dbReference type="EMBL" id="CU468230">
    <property type="protein sequence ID" value="CAP02733.1"/>
    <property type="molecule type" value="Genomic_DNA"/>
</dbReference>
<dbReference type="SMR" id="B0VNZ7"/>
<dbReference type="KEGG" id="abm:ABSDF3470"/>
<dbReference type="HOGENOM" id="CLU_039268_1_2_6"/>
<dbReference type="UniPathway" id="UPA00219"/>
<dbReference type="Proteomes" id="UP000001741">
    <property type="component" value="Chromosome"/>
</dbReference>
<dbReference type="GO" id="GO:0005829">
    <property type="term" value="C:cytosol"/>
    <property type="evidence" value="ECO:0007669"/>
    <property type="project" value="TreeGrafter"/>
</dbReference>
<dbReference type="GO" id="GO:0005524">
    <property type="term" value="F:ATP binding"/>
    <property type="evidence" value="ECO:0007669"/>
    <property type="project" value="UniProtKB-KW"/>
</dbReference>
<dbReference type="GO" id="GO:0008716">
    <property type="term" value="F:D-alanine-D-alanine ligase activity"/>
    <property type="evidence" value="ECO:0007669"/>
    <property type="project" value="UniProtKB-UniRule"/>
</dbReference>
<dbReference type="GO" id="GO:0046872">
    <property type="term" value="F:metal ion binding"/>
    <property type="evidence" value="ECO:0007669"/>
    <property type="project" value="UniProtKB-KW"/>
</dbReference>
<dbReference type="GO" id="GO:0071555">
    <property type="term" value="P:cell wall organization"/>
    <property type="evidence" value="ECO:0007669"/>
    <property type="project" value="UniProtKB-KW"/>
</dbReference>
<dbReference type="GO" id="GO:0009252">
    <property type="term" value="P:peptidoglycan biosynthetic process"/>
    <property type="evidence" value="ECO:0007669"/>
    <property type="project" value="UniProtKB-UniRule"/>
</dbReference>
<dbReference type="GO" id="GO:0008360">
    <property type="term" value="P:regulation of cell shape"/>
    <property type="evidence" value="ECO:0007669"/>
    <property type="project" value="UniProtKB-KW"/>
</dbReference>
<dbReference type="FunFam" id="3.30.1490.20:FF:000007">
    <property type="entry name" value="D-alanine--D-alanine ligase"/>
    <property type="match status" value="1"/>
</dbReference>
<dbReference type="FunFam" id="3.30.470.20:FF:000008">
    <property type="entry name" value="D-alanine--D-alanine ligase"/>
    <property type="match status" value="1"/>
</dbReference>
<dbReference type="Gene3D" id="3.40.50.20">
    <property type="match status" value="1"/>
</dbReference>
<dbReference type="Gene3D" id="3.30.470.20">
    <property type="entry name" value="ATP-grasp fold, B domain"/>
    <property type="match status" value="1"/>
</dbReference>
<dbReference type="HAMAP" id="MF_00047">
    <property type="entry name" value="Dala_Dala_lig"/>
    <property type="match status" value="1"/>
</dbReference>
<dbReference type="InterPro" id="IPR011761">
    <property type="entry name" value="ATP-grasp"/>
</dbReference>
<dbReference type="InterPro" id="IPR000291">
    <property type="entry name" value="D-Ala_lig_Van_CS"/>
</dbReference>
<dbReference type="InterPro" id="IPR005905">
    <property type="entry name" value="D_ala_D_ala"/>
</dbReference>
<dbReference type="InterPro" id="IPR011095">
    <property type="entry name" value="Dala_Dala_lig_C"/>
</dbReference>
<dbReference type="InterPro" id="IPR011127">
    <property type="entry name" value="Dala_Dala_lig_N"/>
</dbReference>
<dbReference type="InterPro" id="IPR016185">
    <property type="entry name" value="PreATP-grasp_dom_sf"/>
</dbReference>
<dbReference type="NCBIfam" id="TIGR01205">
    <property type="entry name" value="D_ala_D_alaTIGR"/>
    <property type="match status" value="1"/>
</dbReference>
<dbReference type="NCBIfam" id="NF002378">
    <property type="entry name" value="PRK01372.1"/>
    <property type="match status" value="1"/>
</dbReference>
<dbReference type="PANTHER" id="PTHR23132">
    <property type="entry name" value="D-ALANINE--D-ALANINE LIGASE"/>
    <property type="match status" value="1"/>
</dbReference>
<dbReference type="PANTHER" id="PTHR23132:SF23">
    <property type="entry name" value="D-ALANINE--D-ALANINE LIGASE B"/>
    <property type="match status" value="1"/>
</dbReference>
<dbReference type="Pfam" id="PF07478">
    <property type="entry name" value="Dala_Dala_lig_C"/>
    <property type="match status" value="1"/>
</dbReference>
<dbReference type="Pfam" id="PF01820">
    <property type="entry name" value="Dala_Dala_lig_N"/>
    <property type="match status" value="1"/>
</dbReference>
<dbReference type="PIRSF" id="PIRSF039102">
    <property type="entry name" value="Ddl/VanB"/>
    <property type="match status" value="1"/>
</dbReference>
<dbReference type="SUPFAM" id="SSF56059">
    <property type="entry name" value="Glutathione synthetase ATP-binding domain-like"/>
    <property type="match status" value="1"/>
</dbReference>
<dbReference type="SUPFAM" id="SSF52440">
    <property type="entry name" value="PreATP-grasp domain"/>
    <property type="match status" value="1"/>
</dbReference>
<dbReference type="PROSITE" id="PS50975">
    <property type="entry name" value="ATP_GRASP"/>
    <property type="match status" value="1"/>
</dbReference>
<dbReference type="PROSITE" id="PS00843">
    <property type="entry name" value="DALA_DALA_LIGASE_1"/>
    <property type="match status" value="1"/>
</dbReference>
<dbReference type="PROSITE" id="PS00844">
    <property type="entry name" value="DALA_DALA_LIGASE_2"/>
    <property type="match status" value="1"/>
</dbReference>
<name>DDL_ACIBS</name>
<reference key="1">
    <citation type="journal article" date="2008" name="PLoS ONE">
        <title>Comparative analysis of Acinetobacters: three genomes for three lifestyles.</title>
        <authorList>
            <person name="Vallenet D."/>
            <person name="Nordmann P."/>
            <person name="Barbe V."/>
            <person name="Poirel L."/>
            <person name="Mangenot S."/>
            <person name="Bataille E."/>
            <person name="Dossat C."/>
            <person name="Gas S."/>
            <person name="Kreimeyer A."/>
            <person name="Lenoble P."/>
            <person name="Oztas S."/>
            <person name="Poulain J."/>
            <person name="Segurens B."/>
            <person name="Robert C."/>
            <person name="Abergel C."/>
            <person name="Claverie J.-M."/>
            <person name="Raoult D."/>
            <person name="Medigue C."/>
            <person name="Weissenbach J."/>
            <person name="Cruveiller S."/>
        </authorList>
    </citation>
    <scope>NUCLEOTIDE SEQUENCE [LARGE SCALE GENOMIC DNA]</scope>
    <source>
        <strain>SDF</strain>
    </source>
</reference>